<dbReference type="EMBL" id="AK149384">
    <property type="protein sequence ID" value="BAE28845.1"/>
    <property type="molecule type" value="mRNA"/>
</dbReference>
<dbReference type="EMBL" id="AK165811">
    <property type="protein sequence ID" value="BAE38390.1"/>
    <property type="molecule type" value="mRNA"/>
</dbReference>
<dbReference type="EMBL" id="BC021608">
    <property type="protein sequence ID" value="AAH21608.1"/>
    <property type="molecule type" value="mRNA"/>
</dbReference>
<dbReference type="EMBL" id="BC021613">
    <property type="protein sequence ID" value="AAH21613.1"/>
    <property type="molecule type" value="mRNA"/>
</dbReference>
<dbReference type="EMBL" id="BC024432">
    <property type="protein sequence ID" value="AAH24432.1"/>
    <property type="molecule type" value="mRNA"/>
</dbReference>
<dbReference type="EMBL" id="BC026825">
    <property type="protein sequence ID" value="AAH26825.1"/>
    <property type="molecule type" value="mRNA"/>
</dbReference>
<dbReference type="CCDS" id="CCDS23121.1"/>
<dbReference type="RefSeq" id="NP_620401.1">
    <property type="nucleotide sequence ID" value="NM_138951.1"/>
</dbReference>
<dbReference type="SMR" id="Q8VBW8"/>
<dbReference type="BioGRID" id="228694">
    <property type="interactions" value="1"/>
</dbReference>
<dbReference type="FunCoup" id="Q8VBW8">
    <property type="interactions" value="3"/>
</dbReference>
<dbReference type="STRING" id="10090.ENSMUSP00000042183"/>
<dbReference type="iPTMnet" id="Q8VBW8"/>
<dbReference type="PhosphoSitePlus" id="Q8VBW8"/>
<dbReference type="SwissPalm" id="Q8VBW8"/>
<dbReference type="jPOST" id="Q8VBW8"/>
<dbReference type="PaxDb" id="10090-ENSMUSP00000042183"/>
<dbReference type="PeptideAtlas" id="Q8VBW8"/>
<dbReference type="ProteomicsDB" id="298007"/>
<dbReference type="Antibodypedia" id="52638">
    <property type="antibodies" value="8 antibodies from 7 providers"/>
</dbReference>
<dbReference type="DNASU" id="192653"/>
<dbReference type="Ensembl" id="ENSMUST00000044694.8">
    <property type="protein sequence ID" value="ENSMUSP00000042183.7"/>
    <property type="gene ID" value="ENSMUSG00000039438.8"/>
</dbReference>
<dbReference type="GeneID" id="192653"/>
<dbReference type="KEGG" id="mmu:192653"/>
<dbReference type="UCSC" id="uc009peo.1">
    <property type="organism name" value="mouse"/>
</dbReference>
<dbReference type="AGR" id="MGI:2384760"/>
<dbReference type="CTD" id="143941"/>
<dbReference type="MGI" id="MGI:2384760">
    <property type="gene designation" value="Ttc36"/>
</dbReference>
<dbReference type="VEuPathDB" id="HostDB:ENSMUSG00000039438"/>
<dbReference type="eggNOG" id="KOG4555">
    <property type="taxonomic scope" value="Eukaryota"/>
</dbReference>
<dbReference type="GeneTree" id="ENSGT00390000007968"/>
<dbReference type="HOGENOM" id="CLU_1464567_0_0_1"/>
<dbReference type="InParanoid" id="Q8VBW8"/>
<dbReference type="OMA" id="CNQMLCE"/>
<dbReference type="OrthoDB" id="539634at2759"/>
<dbReference type="PhylomeDB" id="Q8VBW8"/>
<dbReference type="TreeFam" id="TF105820"/>
<dbReference type="BioGRID-ORCS" id="192653">
    <property type="hits" value="6 hits in 79 CRISPR screens"/>
</dbReference>
<dbReference type="PRO" id="PR:Q8VBW8"/>
<dbReference type="Proteomes" id="UP000000589">
    <property type="component" value="Chromosome 9"/>
</dbReference>
<dbReference type="RNAct" id="Q8VBW8">
    <property type="molecule type" value="protein"/>
</dbReference>
<dbReference type="Bgee" id="ENSMUSG00000039438">
    <property type="expression patterns" value="Expressed in proximal tubule and 67 other cell types or tissues"/>
</dbReference>
<dbReference type="GO" id="GO:0021954">
    <property type="term" value="P:central nervous system neuron development"/>
    <property type="evidence" value="ECO:0000315"/>
    <property type="project" value="MGI"/>
</dbReference>
<dbReference type="GO" id="GO:0007613">
    <property type="term" value="P:memory"/>
    <property type="evidence" value="ECO:0000315"/>
    <property type="project" value="MGI"/>
</dbReference>
<dbReference type="GO" id="GO:0032435">
    <property type="term" value="P:negative regulation of proteasomal ubiquitin-dependent protein catabolic process"/>
    <property type="evidence" value="ECO:0000315"/>
    <property type="project" value="MGI"/>
</dbReference>
<dbReference type="GO" id="GO:1902915">
    <property type="term" value="P:negative regulation of protein polyubiquitination"/>
    <property type="evidence" value="ECO:0000315"/>
    <property type="project" value="MGI"/>
</dbReference>
<dbReference type="GO" id="GO:0006570">
    <property type="term" value="P:tyrosine metabolic process"/>
    <property type="evidence" value="ECO:0000315"/>
    <property type="project" value="MGI"/>
</dbReference>
<dbReference type="GO" id="GO:0008542">
    <property type="term" value="P:visual learning"/>
    <property type="evidence" value="ECO:0000315"/>
    <property type="project" value="MGI"/>
</dbReference>
<dbReference type="FunFam" id="1.25.40.10:FF:000213">
    <property type="entry name" value="Tetratricopeptide repeat domain 36"/>
    <property type="match status" value="1"/>
</dbReference>
<dbReference type="Gene3D" id="1.25.40.10">
    <property type="entry name" value="Tetratricopeptide repeat domain"/>
    <property type="match status" value="1"/>
</dbReference>
<dbReference type="InterPro" id="IPR011990">
    <property type="entry name" value="TPR-like_helical_dom_sf"/>
</dbReference>
<dbReference type="InterPro" id="IPR019734">
    <property type="entry name" value="TPR_rpt"/>
</dbReference>
<dbReference type="InterPro" id="IPR038906">
    <property type="entry name" value="TTC36"/>
</dbReference>
<dbReference type="PANTHER" id="PTHR21405">
    <property type="entry name" value="CDNA SEQUENCE BC021608"/>
    <property type="match status" value="1"/>
</dbReference>
<dbReference type="PANTHER" id="PTHR21405:SF0">
    <property type="entry name" value="TETRATRICOPEPTIDE REPEAT PROTEIN 36"/>
    <property type="match status" value="1"/>
</dbReference>
<dbReference type="Pfam" id="PF13181">
    <property type="entry name" value="TPR_8"/>
    <property type="match status" value="1"/>
</dbReference>
<dbReference type="SMART" id="SM00028">
    <property type="entry name" value="TPR"/>
    <property type="match status" value="3"/>
</dbReference>
<dbReference type="SUPFAM" id="SSF48452">
    <property type="entry name" value="TPR-like"/>
    <property type="match status" value="1"/>
</dbReference>
<dbReference type="PROSITE" id="PS50005">
    <property type="entry name" value="TPR"/>
    <property type="match status" value="3"/>
</dbReference>
<dbReference type="PROSITE" id="PS50293">
    <property type="entry name" value="TPR_REGION"/>
    <property type="match status" value="1"/>
</dbReference>
<protein>
    <recommendedName>
        <fullName>Tetratricopeptide repeat protein 36</fullName>
        <shortName>TPR repeat protein 36</shortName>
    </recommendedName>
</protein>
<sequence length="186" mass="20132">MGTPNDQAVLQAIFNPDTPFGDVVGLDLEEAEEGDEDGVFPQAQLEHSKALELQGVRAAEAGDLHTALEKFGQAISLLPDRASAYNNRAQARRLQGDVAGALEDLERAVTLSGGRGRAARQSFVQSGLLARFQGRDDDARRDFEKAARLGSPFARRQLVLLNPYAALCNRMLADMMGQLRAPSNGR</sequence>
<proteinExistence type="evidence at protein level"/>
<keyword id="KW-1185">Reference proteome</keyword>
<keyword id="KW-0677">Repeat</keyword>
<keyword id="KW-0802">TPR repeat</keyword>
<accession>Q8VBW8</accession>
<comment type="similarity">
    <text evidence="1">Belongs to the TTC36 family.</text>
</comment>
<reference key="1">
    <citation type="journal article" date="2005" name="Science">
        <title>The transcriptional landscape of the mammalian genome.</title>
        <authorList>
            <person name="Carninci P."/>
            <person name="Kasukawa T."/>
            <person name="Katayama S."/>
            <person name="Gough J."/>
            <person name="Frith M.C."/>
            <person name="Maeda N."/>
            <person name="Oyama R."/>
            <person name="Ravasi T."/>
            <person name="Lenhard B."/>
            <person name="Wells C."/>
            <person name="Kodzius R."/>
            <person name="Shimokawa K."/>
            <person name="Bajic V.B."/>
            <person name="Brenner S.E."/>
            <person name="Batalov S."/>
            <person name="Forrest A.R."/>
            <person name="Zavolan M."/>
            <person name="Davis M.J."/>
            <person name="Wilming L.G."/>
            <person name="Aidinis V."/>
            <person name="Allen J.E."/>
            <person name="Ambesi-Impiombato A."/>
            <person name="Apweiler R."/>
            <person name="Aturaliya R.N."/>
            <person name="Bailey T.L."/>
            <person name="Bansal M."/>
            <person name="Baxter L."/>
            <person name="Beisel K.W."/>
            <person name="Bersano T."/>
            <person name="Bono H."/>
            <person name="Chalk A.M."/>
            <person name="Chiu K.P."/>
            <person name="Choudhary V."/>
            <person name="Christoffels A."/>
            <person name="Clutterbuck D.R."/>
            <person name="Crowe M.L."/>
            <person name="Dalla E."/>
            <person name="Dalrymple B.P."/>
            <person name="de Bono B."/>
            <person name="Della Gatta G."/>
            <person name="di Bernardo D."/>
            <person name="Down T."/>
            <person name="Engstrom P."/>
            <person name="Fagiolini M."/>
            <person name="Faulkner G."/>
            <person name="Fletcher C.F."/>
            <person name="Fukushima T."/>
            <person name="Furuno M."/>
            <person name="Futaki S."/>
            <person name="Gariboldi M."/>
            <person name="Georgii-Hemming P."/>
            <person name="Gingeras T.R."/>
            <person name="Gojobori T."/>
            <person name="Green R.E."/>
            <person name="Gustincich S."/>
            <person name="Harbers M."/>
            <person name="Hayashi Y."/>
            <person name="Hensch T.K."/>
            <person name="Hirokawa N."/>
            <person name="Hill D."/>
            <person name="Huminiecki L."/>
            <person name="Iacono M."/>
            <person name="Ikeo K."/>
            <person name="Iwama A."/>
            <person name="Ishikawa T."/>
            <person name="Jakt M."/>
            <person name="Kanapin A."/>
            <person name="Katoh M."/>
            <person name="Kawasawa Y."/>
            <person name="Kelso J."/>
            <person name="Kitamura H."/>
            <person name="Kitano H."/>
            <person name="Kollias G."/>
            <person name="Krishnan S.P."/>
            <person name="Kruger A."/>
            <person name="Kummerfeld S.K."/>
            <person name="Kurochkin I.V."/>
            <person name="Lareau L.F."/>
            <person name="Lazarevic D."/>
            <person name="Lipovich L."/>
            <person name="Liu J."/>
            <person name="Liuni S."/>
            <person name="McWilliam S."/>
            <person name="Madan Babu M."/>
            <person name="Madera M."/>
            <person name="Marchionni L."/>
            <person name="Matsuda H."/>
            <person name="Matsuzawa S."/>
            <person name="Miki H."/>
            <person name="Mignone F."/>
            <person name="Miyake S."/>
            <person name="Morris K."/>
            <person name="Mottagui-Tabar S."/>
            <person name="Mulder N."/>
            <person name="Nakano N."/>
            <person name="Nakauchi H."/>
            <person name="Ng P."/>
            <person name="Nilsson R."/>
            <person name="Nishiguchi S."/>
            <person name="Nishikawa S."/>
            <person name="Nori F."/>
            <person name="Ohara O."/>
            <person name="Okazaki Y."/>
            <person name="Orlando V."/>
            <person name="Pang K.C."/>
            <person name="Pavan W.J."/>
            <person name="Pavesi G."/>
            <person name="Pesole G."/>
            <person name="Petrovsky N."/>
            <person name="Piazza S."/>
            <person name="Reed J."/>
            <person name="Reid J.F."/>
            <person name="Ring B.Z."/>
            <person name="Ringwald M."/>
            <person name="Rost B."/>
            <person name="Ruan Y."/>
            <person name="Salzberg S.L."/>
            <person name="Sandelin A."/>
            <person name="Schneider C."/>
            <person name="Schoenbach C."/>
            <person name="Sekiguchi K."/>
            <person name="Semple C.A."/>
            <person name="Seno S."/>
            <person name="Sessa L."/>
            <person name="Sheng Y."/>
            <person name="Shibata Y."/>
            <person name="Shimada H."/>
            <person name="Shimada K."/>
            <person name="Silva D."/>
            <person name="Sinclair B."/>
            <person name="Sperling S."/>
            <person name="Stupka E."/>
            <person name="Sugiura K."/>
            <person name="Sultana R."/>
            <person name="Takenaka Y."/>
            <person name="Taki K."/>
            <person name="Tammoja K."/>
            <person name="Tan S.L."/>
            <person name="Tang S."/>
            <person name="Taylor M.S."/>
            <person name="Tegner J."/>
            <person name="Teichmann S.A."/>
            <person name="Ueda H.R."/>
            <person name="van Nimwegen E."/>
            <person name="Verardo R."/>
            <person name="Wei C.L."/>
            <person name="Yagi K."/>
            <person name="Yamanishi H."/>
            <person name="Zabarovsky E."/>
            <person name="Zhu S."/>
            <person name="Zimmer A."/>
            <person name="Hide W."/>
            <person name="Bult C."/>
            <person name="Grimmond S.M."/>
            <person name="Teasdale R.D."/>
            <person name="Liu E.T."/>
            <person name="Brusic V."/>
            <person name="Quackenbush J."/>
            <person name="Wahlestedt C."/>
            <person name="Mattick J.S."/>
            <person name="Hume D.A."/>
            <person name="Kai C."/>
            <person name="Sasaki D."/>
            <person name="Tomaru Y."/>
            <person name="Fukuda S."/>
            <person name="Kanamori-Katayama M."/>
            <person name="Suzuki M."/>
            <person name="Aoki J."/>
            <person name="Arakawa T."/>
            <person name="Iida J."/>
            <person name="Imamura K."/>
            <person name="Itoh M."/>
            <person name="Kato T."/>
            <person name="Kawaji H."/>
            <person name="Kawagashira N."/>
            <person name="Kawashima T."/>
            <person name="Kojima M."/>
            <person name="Kondo S."/>
            <person name="Konno H."/>
            <person name="Nakano K."/>
            <person name="Ninomiya N."/>
            <person name="Nishio T."/>
            <person name="Okada M."/>
            <person name="Plessy C."/>
            <person name="Shibata K."/>
            <person name="Shiraki T."/>
            <person name="Suzuki S."/>
            <person name="Tagami M."/>
            <person name="Waki K."/>
            <person name="Watahiki A."/>
            <person name="Okamura-Oho Y."/>
            <person name="Suzuki H."/>
            <person name="Kawai J."/>
            <person name="Hayashizaki Y."/>
        </authorList>
    </citation>
    <scope>NUCLEOTIDE SEQUENCE [LARGE SCALE MRNA]</scope>
    <source>
        <strain>C57BL/6J</strain>
        <tissue>Gall bladder</tissue>
        <tissue>Liver</tissue>
    </source>
</reference>
<reference key="2">
    <citation type="journal article" date="2004" name="Genome Res.">
        <title>The status, quality, and expansion of the NIH full-length cDNA project: the Mammalian Gene Collection (MGC).</title>
        <authorList>
            <consortium name="The MGC Project Team"/>
        </authorList>
    </citation>
    <scope>NUCLEOTIDE SEQUENCE [LARGE SCALE MRNA]</scope>
    <source>
        <strain>FVB/N</strain>
        <tissue>Kidney</tissue>
        <tissue>Liver</tissue>
    </source>
</reference>
<reference key="3">
    <citation type="journal article" date="2010" name="Cell">
        <title>A tissue-specific atlas of mouse protein phosphorylation and expression.</title>
        <authorList>
            <person name="Huttlin E.L."/>
            <person name="Jedrychowski M.P."/>
            <person name="Elias J.E."/>
            <person name="Goswami T."/>
            <person name="Rad R."/>
            <person name="Beausoleil S.A."/>
            <person name="Villen J."/>
            <person name="Haas W."/>
            <person name="Sowa M.E."/>
            <person name="Gygi S.P."/>
        </authorList>
    </citation>
    <scope>IDENTIFICATION BY MASS SPECTROMETRY [LARGE SCALE ANALYSIS]</scope>
    <source>
        <tissue>Kidney</tissue>
        <tissue>Liver</tissue>
    </source>
</reference>
<feature type="chain" id="PRO_0000332180" description="Tetratricopeptide repeat protein 36">
    <location>
        <begin position="1"/>
        <end position="186"/>
    </location>
</feature>
<feature type="repeat" description="TPR 1">
    <location>
        <begin position="48"/>
        <end position="81"/>
    </location>
</feature>
<feature type="repeat" description="TPR 2">
    <location>
        <begin position="83"/>
        <end position="115"/>
    </location>
</feature>
<feature type="repeat" description="TPR 3">
    <location>
        <begin position="120"/>
        <end position="153"/>
    </location>
</feature>
<name>TTC36_MOUSE</name>
<evidence type="ECO:0000305" key="1"/>
<organism>
    <name type="scientific">Mus musculus</name>
    <name type="common">Mouse</name>
    <dbReference type="NCBI Taxonomy" id="10090"/>
    <lineage>
        <taxon>Eukaryota</taxon>
        <taxon>Metazoa</taxon>
        <taxon>Chordata</taxon>
        <taxon>Craniata</taxon>
        <taxon>Vertebrata</taxon>
        <taxon>Euteleostomi</taxon>
        <taxon>Mammalia</taxon>
        <taxon>Eutheria</taxon>
        <taxon>Euarchontoglires</taxon>
        <taxon>Glires</taxon>
        <taxon>Rodentia</taxon>
        <taxon>Myomorpha</taxon>
        <taxon>Muroidea</taxon>
        <taxon>Muridae</taxon>
        <taxon>Murinae</taxon>
        <taxon>Mus</taxon>
        <taxon>Mus</taxon>
    </lineage>
</organism>
<gene>
    <name type="primary">Ttc36</name>
</gene>